<sequence length="127" mass="14476">MTSKRRNNGRGKKGRGHVKYIRCTNCARCVPKDKAIKKFVIRNIVEAAAVRDISDASVYEVYALPKLYAKLLYCVSCAIHSKIVRNRSREARKDRTPPIRFRPMRGEGGQNARPGQANKLFNMSPRK</sequence>
<organism>
    <name type="scientific">Octopus vulgaris</name>
    <name type="common">Common octopus</name>
    <dbReference type="NCBI Taxonomy" id="6645"/>
    <lineage>
        <taxon>Eukaryota</taxon>
        <taxon>Metazoa</taxon>
        <taxon>Spiralia</taxon>
        <taxon>Lophotrochozoa</taxon>
        <taxon>Mollusca</taxon>
        <taxon>Cephalopoda</taxon>
        <taxon>Coleoidea</taxon>
        <taxon>Octopodiformes</taxon>
        <taxon>Octopoda</taxon>
        <taxon>Incirrata</taxon>
        <taxon>Octopodidae</taxon>
        <taxon>Octopus</taxon>
    </lineage>
</organism>
<accession>P27085</accession>
<reference key="1">
    <citation type="journal article" date="1989" name="Dokl. Akad. Nauk SSSR">
        <title>Isolation and structural characteristics of cDNA for octopus proteins which are homologous to rat S26 ribosomal protein.</title>
        <authorList>
            <person name="Zinov'Eva R.D."/>
            <person name="Tomarev S.I."/>
        </authorList>
    </citation>
    <scope>NUCLEOTIDE SEQUENCE [MRNA]</scope>
</reference>
<dbReference type="EMBL" id="X17303">
    <property type="protein sequence ID" value="CAB57819.1"/>
    <property type="molecule type" value="mRNA"/>
</dbReference>
<dbReference type="SMR" id="P27085"/>
<dbReference type="Proteomes" id="UP000515154">
    <property type="component" value="Unplaced"/>
</dbReference>
<dbReference type="GO" id="GO:0098556">
    <property type="term" value="C:cytoplasmic side of rough endoplasmic reticulum membrane"/>
    <property type="evidence" value="ECO:0000250"/>
    <property type="project" value="UniProtKB"/>
</dbReference>
<dbReference type="GO" id="GO:0022627">
    <property type="term" value="C:cytosolic small ribosomal subunit"/>
    <property type="evidence" value="ECO:0000250"/>
    <property type="project" value="UniProtKB"/>
</dbReference>
<dbReference type="GO" id="GO:0005840">
    <property type="term" value="C:ribosome"/>
    <property type="evidence" value="ECO:0000250"/>
    <property type="project" value="UniProtKB"/>
</dbReference>
<dbReference type="GO" id="GO:0003729">
    <property type="term" value="F:mRNA binding"/>
    <property type="evidence" value="ECO:0007669"/>
    <property type="project" value="TreeGrafter"/>
</dbReference>
<dbReference type="GO" id="GO:0003735">
    <property type="term" value="F:structural constituent of ribosome"/>
    <property type="evidence" value="ECO:0007669"/>
    <property type="project" value="InterPro"/>
</dbReference>
<dbReference type="GO" id="GO:0002181">
    <property type="term" value="P:cytoplasmic translation"/>
    <property type="evidence" value="ECO:0000250"/>
    <property type="project" value="UniProtKB"/>
</dbReference>
<dbReference type="FunFam" id="3.30.1740.20:FF:000001">
    <property type="entry name" value="40S ribosomal protein S26"/>
    <property type="match status" value="1"/>
</dbReference>
<dbReference type="Gene3D" id="3.30.1740.20">
    <property type="entry name" value="Ribosomal protein S26e"/>
    <property type="match status" value="1"/>
</dbReference>
<dbReference type="InterPro" id="IPR000892">
    <property type="entry name" value="Ribosomal_eS26"/>
</dbReference>
<dbReference type="InterPro" id="IPR047864">
    <property type="entry name" value="Ribosomal_eS26_CS"/>
</dbReference>
<dbReference type="InterPro" id="IPR038551">
    <property type="entry name" value="Ribosomal_eS26_sf"/>
</dbReference>
<dbReference type="PANTHER" id="PTHR12538">
    <property type="entry name" value="40S RIBOSOMAL PROTEIN S26"/>
    <property type="match status" value="1"/>
</dbReference>
<dbReference type="PANTHER" id="PTHR12538:SF0">
    <property type="entry name" value="40S RIBOSOMAL PROTEIN S26"/>
    <property type="match status" value="1"/>
</dbReference>
<dbReference type="Pfam" id="PF01283">
    <property type="entry name" value="Ribosomal_S26e"/>
    <property type="match status" value="1"/>
</dbReference>
<dbReference type="PROSITE" id="PS00733">
    <property type="entry name" value="RIBOSOMAL_S26E"/>
    <property type="match status" value="1"/>
</dbReference>
<gene>
    <name type="primary">RPS26</name>
</gene>
<proteinExistence type="evidence at transcript level"/>
<comment type="subunit">
    <text evidence="1">Component of the 40S small ribosomal subunit.</text>
</comment>
<comment type="subcellular location">
    <subcellularLocation>
        <location evidence="2">Cytoplasm</location>
        <location evidence="2">Cytosol</location>
    </subcellularLocation>
    <subcellularLocation>
        <location evidence="2">Cytoplasm</location>
    </subcellularLocation>
    <subcellularLocation>
        <location evidence="1">Rough endoplasmic reticulum</location>
    </subcellularLocation>
    <text evidence="1 2">Detected on cytosolic polysomes (By similarity). Detected in ribosomes that are associated with the rough endoplasmic reticulum (By similarity).</text>
</comment>
<comment type="similarity">
    <text evidence="4">Belongs to the eukaryotic ribosomal protein eS26 family.</text>
</comment>
<feature type="chain" id="PRO_0000204516" description="Small ribosomal subunit protein eS26">
    <location>
        <begin position="1"/>
        <end position="127"/>
    </location>
</feature>
<feature type="region of interest" description="Disordered" evidence="3">
    <location>
        <begin position="86"/>
        <end position="127"/>
    </location>
</feature>
<feature type="compositionally biased region" description="Basic and acidic residues" evidence="3">
    <location>
        <begin position="87"/>
        <end position="97"/>
    </location>
</feature>
<evidence type="ECO:0000250" key="1">
    <source>
        <dbReference type="UniProtKB" id="P49171"/>
    </source>
</evidence>
<evidence type="ECO:0000250" key="2">
    <source>
        <dbReference type="UniProtKB" id="P62854"/>
    </source>
</evidence>
<evidence type="ECO:0000256" key="3">
    <source>
        <dbReference type="SAM" id="MobiDB-lite"/>
    </source>
</evidence>
<evidence type="ECO:0000305" key="4"/>
<keyword id="KW-0963">Cytoplasm</keyword>
<keyword id="KW-0256">Endoplasmic reticulum</keyword>
<keyword id="KW-1185">Reference proteome</keyword>
<keyword id="KW-0687">Ribonucleoprotein</keyword>
<keyword id="KW-0689">Ribosomal protein</keyword>
<protein>
    <recommendedName>
        <fullName evidence="4">Small ribosomal subunit protein eS26</fullName>
    </recommendedName>
    <alternativeName>
        <fullName>40S ribosomal protein S26</fullName>
    </alternativeName>
</protein>
<name>RS26_OCTVU</name>